<proteinExistence type="inferred from homology"/>
<evidence type="ECO:0000255" key="1">
    <source>
        <dbReference type="HAMAP-Rule" id="MF_01595"/>
    </source>
</evidence>
<evidence type="ECO:0000256" key="2">
    <source>
        <dbReference type="SAM" id="MobiDB-lite"/>
    </source>
</evidence>
<comment type="function">
    <text evidence="1">Involved in mRNA degradation. Catalyzes the phosphorolysis of single-stranded polyribonucleotides processively in the 3'- to 5'-direction.</text>
</comment>
<comment type="catalytic activity">
    <reaction evidence="1">
        <text>RNA(n+1) + phosphate = RNA(n) + a ribonucleoside 5'-diphosphate</text>
        <dbReference type="Rhea" id="RHEA:22096"/>
        <dbReference type="Rhea" id="RHEA-COMP:14527"/>
        <dbReference type="Rhea" id="RHEA-COMP:17342"/>
        <dbReference type="ChEBI" id="CHEBI:43474"/>
        <dbReference type="ChEBI" id="CHEBI:57930"/>
        <dbReference type="ChEBI" id="CHEBI:140395"/>
        <dbReference type="EC" id="2.7.7.8"/>
    </reaction>
</comment>
<comment type="cofactor">
    <cofactor evidence="1">
        <name>Mg(2+)</name>
        <dbReference type="ChEBI" id="CHEBI:18420"/>
    </cofactor>
</comment>
<comment type="subcellular location">
    <subcellularLocation>
        <location evidence="1">Cytoplasm</location>
    </subcellularLocation>
</comment>
<comment type="similarity">
    <text evidence="1">Belongs to the polyribonucleotide nucleotidyltransferase family.</text>
</comment>
<name>PNP_NATTJ</name>
<dbReference type="EC" id="2.7.7.8" evidence="1"/>
<dbReference type="EMBL" id="CP001034">
    <property type="protein sequence ID" value="ACB85033.1"/>
    <property type="molecule type" value="Genomic_DNA"/>
</dbReference>
<dbReference type="RefSeq" id="WP_012447907.1">
    <property type="nucleotide sequence ID" value="NC_010718.1"/>
</dbReference>
<dbReference type="SMR" id="B2A3A3"/>
<dbReference type="FunCoup" id="B2A3A3">
    <property type="interactions" value="461"/>
</dbReference>
<dbReference type="STRING" id="457570.Nther_1450"/>
<dbReference type="KEGG" id="nth:Nther_1450"/>
<dbReference type="eggNOG" id="COG1185">
    <property type="taxonomic scope" value="Bacteria"/>
</dbReference>
<dbReference type="HOGENOM" id="CLU_004217_2_2_9"/>
<dbReference type="InParanoid" id="B2A3A3"/>
<dbReference type="OrthoDB" id="9804305at2"/>
<dbReference type="Proteomes" id="UP000001683">
    <property type="component" value="Chromosome"/>
</dbReference>
<dbReference type="GO" id="GO:0005829">
    <property type="term" value="C:cytosol"/>
    <property type="evidence" value="ECO:0007669"/>
    <property type="project" value="TreeGrafter"/>
</dbReference>
<dbReference type="GO" id="GO:0000175">
    <property type="term" value="F:3'-5'-RNA exonuclease activity"/>
    <property type="evidence" value="ECO:0007669"/>
    <property type="project" value="TreeGrafter"/>
</dbReference>
<dbReference type="GO" id="GO:0000287">
    <property type="term" value="F:magnesium ion binding"/>
    <property type="evidence" value="ECO:0007669"/>
    <property type="project" value="UniProtKB-UniRule"/>
</dbReference>
<dbReference type="GO" id="GO:0004654">
    <property type="term" value="F:polyribonucleotide nucleotidyltransferase activity"/>
    <property type="evidence" value="ECO:0007669"/>
    <property type="project" value="UniProtKB-UniRule"/>
</dbReference>
<dbReference type="GO" id="GO:0003723">
    <property type="term" value="F:RNA binding"/>
    <property type="evidence" value="ECO:0007669"/>
    <property type="project" value="UniProtKB-UniRule"/>
</dbReference>
<dbReference type="GO" id="GO:0006402">
    <property type="term" value="P:mRNA catabolic process"/>
    <property type="evidence" value="ECO:0007669"/>
    <property type="project" value="UniProtKB-UniRule"/>
</dbReference>
<dbReference type="GO" id="GO:0006396">
    <property type="term" value="P:RNA processing"/>
    <property type="evidence" value="ECO:0007669"/>
    <property type="project" value="InterPro"/>
</dbReference>
<dbReference type="CDD" id="cd02393">
    <property type="entry name" value="KH-I_PNPase"/>
    <property type="match status" value="1"/>
</dbReference>
<dbReference type="CDD" id="cd11363">
    <property type="entry name" value="RNase_PH_PNPase_1"/>
    <property type="match status" value="1"/>
</dbReference>
<dbReference type="CDD" id="cd11364">
    <property type="entry name" value="RNase_PH_PNPase_2"/>
    <property type="match status" value="1"/>
</dbReference>
<dbReference type="CDD" id="cd04472">
    <property type="entry name" value="S1_PNPase"/>
    <property type="match status" value="1"/>
</dbReference>
<dbReference type="FunFam" id="2.40.50.140:FF:000023">
    <property type="entry name" value="Polyribonucleotide nucleotidyltransferase"/>
    <property type="match status" value="1"/>
</dbReference>
<dbReference type="FunFam" id="3.30.1370.10:FF:000001">
    <property type="entry name" value="Polyribonucleotide nucleotidyltransferase"/>
    <property type="match status" value="1"/>
</dbReference>
<dbReference type="FunFam" id="3.30.230.70:FF:000001">
    <property type="entry name" value="Polyribonucleotide nucleotidyltransferase"/>
    <property type="match status" value="1"/>
</dbReference>
<dbReference type="FunFam" id="3.30.230.70:FF:000002">
    <property type="entry name" value="Polyribonucleotide nucleotidyltransferase"/>
    <property type="match status" value="1"/>
</dbReference>
<dbReference type="Gene3D" id="3.30.230.70">
    <property type="entry name" value="GHMP Kinase, N-terminal domain"/>
    <property type="match status" value="2"/>
</dbReference>
<dbReference type="Gene3D" id="3.30.1370.10">
    <property type="entry name" value="K Homology domain, type 1"/>
    <property type="match status" value="1"/>
</dbReference>
<dbReference type="Gene3D" id="2.40.50.140">
    <property type="entry name" value="Nucleic acid-binding proteins"/>
    <property type="match status" value="1"/>
</dbReference>
<dbReference type="HAMAP" id="MF_01595">
    <property type="entry name" value="PNPase"/>
    <property type="match status" value="1"/>
</dbReference>
<dbReference type="InterPro" id="IPR001247">
    <property type="entry name" value="ExoRNase_PH_dom1"/>
</dbReference>
<dbReference type="InterPro" id="IPR015847">
    <property type="entry name" value="ExoRNase_PH_dom2"/>
</dbReference>
<dbReference type="InterPro" id="IPR036345">
    <property type="entry name" value="ExoRNase_PH_dom2_sf"/>
</dbReference>
<dbReference type="InterPro" id="IPR004087">
    <property type="entry name" value="KH_dom"/>
</dbReference>
<dbReference type="InterPro" id="IPR004088">
    <property type="entry name" value="KH_dom_type_1"/>
</dbReference>
<dbReference type="InterPro" id="IPR036612">
    <property type="entry name" value="KH_dom_type_1_sf"/>
</dbReference>
<dbReference type="InterPro" id="IPR012340">
    <property type="entry name" value="NA-bd_OB-fold"/>
</dbReference>
<dbReference type="InterPro" id="IPR012162">
    <property type="entry name" value="PNPase"/>
</dbReference>
<dbReference type="InterPro" id="IPR027408">
    <property type="entry name" value="PNPase/RNase_PH_dom_sf"/>
</dbReference>
<dbReference type="InterPro" id="IPR015848">
    <property type="entry name" value="PNPase_PH_RNA-bd_bac/org-type"/>
</dbReference>
<dbReference type="InterPro" id="IPR020568">
    <property type="entry name" value="Ribosomal_Su5_D2-typ_SF"/>
</dbReference>
<dbReference type="InterPro" id="IPR003029">
    <property type="entry name" value="S1_domain"/>
</dbReference>
<dbReference type="NCBIfam" id="TIGR03591">
    <property type="entry name" value="polynuc_phos"/>
    <property type="match status" value="1"/>
</dbReference>
<dbReference type="NCBIfam" id="NF008805">
    <property type="entry name" value="PRK11824.1"/>
    <property type="match status" value="1"/>
</dbReference>
<dbReference type="PANTHER" id="PTHR11252">
    <property type="entry name" value="POLYRIBONUCLEOTIDE NUCLEOTIDYLTRANSFERASE"/>
    <property type="match status" value="1"/>
</dbReference>
<dbReference type="PANTHER" id="PTHR11252:SF0">
    <property type="entry name" value="POLYRIBONUCLEOTIDE NUCLEOTIDYLTRANSFERASE 1, MITOCHONDRIAL"/>
    <property type="match status" value="1"/>
</dbReference>
<dbReference type="Pfam" id="PF00013">
    <property type="entry name" value="KH_1"/>
    <property type="match status" value="1"/>
</dbReference>
<dbReference type="Pfam" id="PF03726">
    <property type="entry name" value="PNPase"/>
    <property type="match status" value="1"/>
</dbReference>
<dbReference type="Pfam" id="PF01138">
    <property type="entry name" value="RNase_PH"/>
    <property type="match status" value="2"/>
</dbReference>
<dbReference type="Pfam" id="PF03725">
    <property type="entry name" value="RNase_PH_C"/>
    <property type="match status" value="2"/>
</dbReference>
<dbReference type="Pfam" id="PF00575">
    <property type="entry name" value="S1"/>
    <property type="match status" value="1"/>
</dbReference>
<dbReference type="PIRSF" id="PIRSF005499">
    <property type="entry name" value="PNPase"/>
    <property type="match status" value="1"/>
</dbReference>
<dbReference type="SMART" id="SM00322">
    <property type="entry name" value="KH"/>
    <property type="match status" value="1"/>
</dbReference>
<dbReference type="SMART" id="SM00316">
    <property type="entry name" value="S1"/>
    <property type="match status" value="1"/>
</dbReference>
<dbReference type="SUPFAM" id="SSF54791">
    <property type="entry name" value="Eukaryotic type KH-domain (KH-domain type I)"/>
    <property type="match status" value="1"/>
</dbReference>
<dbReference type="SUPFAM" id="SSF50249">
    <property type="entry name" value="Nucleic acid-binding proteins"/>
    <property type="match status" value="1"/>
</dbReference>
<dbReference type="SUPFAM" id="SSF55666">
    <property type="entry name" value="Ribonuclease PH domain 2-like"/>
    <property type="match status" value="2"/>
</dbReference>
<dbReference type="SUPFAM" id="SSF54211">
    <property type="entry name" value="Ribosomal protein S5 domain 2-like"/>
    <property type="match status" value="2"/>
</dbReference>
<dbReference type="PROSITE" id="PS50084">
    <property type="entry name" value="KH_TYPE_1"/>
    <property type="match status" value="1"/>
</dbReference>
<dbReference type="PROSITE" id="PS50126">
    <property type="entry name" value="S1"/>
    <property type="match status" value="1"/>
</dbReference>
<keyword id="KW-0963">Cytoplasm</keyword>
<keyword id="KW-0460">Magnesium</keyword>
<keyword id="KW-0479">Metal-binding</keyword>
<keyword id="KW-0548">Nucleotidyltransferase</keyword>
<keyword id="KW-1185">Reference proteome</keyword>
<keyword id="KW-0694">RNA-binding</keyword>
<keyword id="KW-0808">Transferase</keyword>
<reference key="1">
    <citation type="submission" date="2008-04" db="EMBL/GenBank/DDBJ databases">
        <title>Complete sequence of chromosome of Natranaerobius thermophilus JW/NM-WN-LF.</title>
        <authorList>
            <consortium name="US DOE Joint Genome Institute"/>
            <person name="Copeland A."/>
            <person name="Lucas S."/>
            <person name="Lapidus A."/>
            <person name="Glavina del Rio T."/>
            <person name="Dalin E."/>
            <person name="Tice H."/>
            <person name="Bruce D."/>
            <person name="Goodwin L."/>
            <person name="Pitluck S."/>
            <person name="Chertkov O."/>
            <person name="Brettin T."/>
            <person name="Detter J.C."/>
            <person name="Han C."/>
            <person name="Kuske C.R."/>
            <person name="Schmutz J."/>
            <person name="Larimer F."/>
            <person name="Land M."/>
            <person name="Hauser L."/>
            <person name="Kyrpides N."/>
            <person name="Lykidis A."/>
            <person name="Mesbah N.M."/>
            <person name="Wiegel J."/>
        </authorList>
    </citation>
    <scope>NUCLEOTIDE SEQUENCE [LARGE SCALE GENOMIC DNA]</scope>
    <source>
        <strain>ATCC BAA-1301 / DSM 18059 / JW/NM-WN-LF</strain>
    </source>
</reference>
<sequence length="718" mass="79043">MPTTVSEEIAGYQLTLETGELAKQANGAVKVQYGNTVVLVTATASKEPKDDLNFFPLTVDYEERLYAVGKIPGGFIKREGKPTEKATLTARLTDRPIRPLFPDGFRNPVHIVSTVLSVDQNCPPEIASIIGASAALSISDIPFDGPIASVKVGKVNDEIVVTPDVDEHEESQLDLVVAGTKDAIMMVEAEANELPEDEMLEAIMKAHEEIKKIITMQEQLVEQVGQKKMEVELDLPSDELVSEVEELALEDIEKVLQIKDKLEREDAMDEAKQKVVDHLLEKYNSEENEDEEEELKEKHIKSAFDSILKREMRSRIIHENSRPDGRGQKEIRPVTCDVDLLPNTHGSGLFTRGQTQVLNVCTLGALGDVQILDGLDIEESKRYMHHYNFPPYSVGEAGFMKGPGRREIGHGALAERALKPMIPTEKDFPYTIRLVSEVLESNGSTSMGSVCASSLSLMDAGVPIEKAVSGIAMGLIKEGDQLAILSDIQGIEDFLGDMDFKVAGTEDGITALQMDIKISGTTREILKQALKQGKDGYLHILNIMKQTISEPREELSPLAPRVIKKQIDPDKIRNVIGPGGKMINKIIDETGVKIDIEPDGLIYISSSDAEQAEQAIKAIDELIKEPEVGEVYLGKVVRTEKYGAFVEILPGKEGLVHISELAEDRVGKTEDVAKVGDEILVKIINIDERGRINLSRKQALGEEDGKTNNDDKKSTKKT</sequence>
<organism>
    <name type="scientific">Natranaerobius thermophilus (strain ATCC BAA-1301 / DSM 18059 / JW/NM-WN-LF)</name>
    <dbReference type="NCBI Taxonomy" id="457570"/>
    <lineage>
        <taxon>Bacteria</taxon>
        <taxon>Bacillati</taxon>
        <taxon>Bacillota</taxon>
        <taxon>Clostridia</taxon>
        <taxon>Natranaerobiales</taxon>
        <taxon>Natranaerobiaceae</taxon>
        <taxon>Natranaerobius</taxon>
    </lineage>
</organism>
<accession>B2A3A3</accession>
<feature type="chain" id="PRO_1000147935" description="Polyribonucleotide nucleotidyltransferase">
    <location>
        <begin position="1"/>
        <end position="718"/>
    </location>
</feature>
<feature type="domain" description="KH" evidence="1">
    <location>
        <begin position="560"/>
        <end position="619"/>
    </location>
</feature>
<feature type="domain" description="S1 motif" evidence="1">
    <location>
        <begin position="629"/>
        <end position="697"/>
    </location>
</feature>
<feature type="region of interest" description="Disordered" evidence="2">
    <location>
        <begin position="695"/>
        <end position="718"/>
    </location>
</feature>
<feature type="compositionally biased region" description="Basic and acidic residues" evidence="2">
    <location>
        <begin position="699"/>
        <end position="718"/>
    </location>
</feature>
<feature type="binding site" evidence="1">
    <location>
        <position position="493"/>
    </location>
    <ligand>
        <name>Mg(2+)</name>
        <dbReference type="ChEBI" id="CHEBI:18420"/>
    </ligand>
</feature>
<feature type="binding site" evidence="1">
    <location>
        <position position="499"/>
    </location>
    <ligand>
        <name>Mg(2+)</name>
        <dbReference type="ChEBI" id="CHEBI:18420"/>
    </ligand>
</feature>
<gene>
    <name evidence="1" type="primary">pnp</name>
    <name type="ordered locus">Nther_1450</name>
</gene>
<protein>
    <recommendedName>
        <fullName evidence="1">Polyribonucleotide nucleotidyltransferase</fullName>
        <ecNumber evidence="1">2.7.7.8</ecNumber>
    </recommendedName>
    <alternativeName>
        <fullName evidence="1">Polynucleotide phosphorylase</fullName>
        <shortName evidence="1">PNPase</shortName>
    </alternativeName>
</protein>